<name>ZNUB_HAEIN</name>
<gene>
    <name type="primary">znuB</name>
    <name type="ordered locus">HI_0407</name>
</gene>
<reference key="1">
    <citation type="journal article" date="1995" name="Science">
        <title>Whole-genome random sequencing and assembly of Haemophilus influenzae Rd.</title>
        <authorList>
            <person name="Fleischmann R.D."/>
            <person name="Adams M.D."/>
            <person name="White O."/>
            <person name="Clayton R.A."/>
            <person name="Kirkness E.F."/>
            <person name="Kerlavage A.R."/>
            <person name="Bult C.J."/>
            <person name="Tomb J.-F."/>
            <person name="Dougherty B.A."/>
            <person name="Merrick J.M."/>
            <person name="McKenney K."/>
            <person name="Sutton G.G."/>
            <person name="FitzHugh W."/>
            <person name="Fields C.A."/>
            <person name="Gocayne J.D."/>
            <person name="Scott J.D."/>
            <person name="Shirley R."/>
            <person name="Liu L.-I."/>
            <person name="Glodek A."/>
            <person name="Kelley J.M."/>
            <person name="Weidman J.F."/>
            <person name="Phillips C.A."/>
            <person name="Spriggs T."/>
            <person name="Hedblom E."/>
            <person name="Cotton M.D."/>
            <person name="Utterback T.R."/>
            <person name="Hanna M.C."/>
            <person name="Nguyen D.T."/>
            <person name="Saudek D.M."/>
            <person name="Brandon R.C."/>
            <person name="Fine L.D."/>
            <person name="Fritchman J.L."/>
            <person name="Fuhrmann J.L."/>
            <person name="Geoghagen N.S.M."/>
            <person name="Gnehm C.L."/>
            <person name="McDonald L.A."/>
            <person name="Small K.V."/>
            <person name="Fraser C.M."/>
            <person name="Smith H.O."/>
            <person name="Venter J.C."/>
        </authorList>
    </citation>
    <scope>NUCLEOTIDE SEQUENCE [LARGE SCALE GENOMIC DNA]</scope>
    <source>
        <strain>ATCC 51907 / DSM 11121 / KW20 / Rd</strain>
    </source>
</reference>
<organism>
    <name type="scientific">Haemophilus influenzae (strain ATCC 51907 / DSM 11121 / KW20 / Rd)</name>
    <dbReference type="NCBI Taxonomy" id="71421"/>
    <lineage>
        <taxon>Bacteria</taxon>
        <taxon>Pseudomonadati</taxon>
        <taxon>Pseudomonadota</taxon>
        <taxon>Gammaproteobacteria</taxon>
        <taxon>Pasteurellales</taxon>
        <taxon>Pasteurellaceae</taxon>
        <taxon>Haemophilus</taxon>
    </lineage>
</organism>
<keyword id="KW-0997">Cell inner membrane</keyword>
<keyword id="KW-1003">Cell membrane</keyword>
<keyword id="KW-0406">Ion transport</keyword>
<keyword id="KW-0472">Membrane</keyword>
<keyword id="KW-1185">Reference proteome</keyword>
<keyword id="KW-0812">Transmembrane</keyword>
<keyword id="KW-1133">Transmembrane helix</keyword>
<keyword id="KW-0813">Transport</keyword>
<keyword id="KW-0862">Zinc</keyword>
<keyword id="KW-0864">Zinc transport</keyword>
<comment type="function">
    <text evidence="1">Involved in the high-affinity zinc uptake transport system.</text>
</comment>
<comment type="subcellular location">
    <subcellularLocation>
        <location evidence="3">Cell inner membrane</location>
        <topology evidence="3">Multi-pass membrane protein</topology>
    </subcellularLocation>
</comment>
<comment type="similarity">
    <text evidence="3">Belongs to the ABC-3 integral membrane protein family.</text>
</comment>
<accession>P44691</accession>
<sequence>MFEILFPALLTGIVLSLITAPLGVFVVWRKMAYFGDTLSHSALLGVALGIFLQVNPYIAIVVLTLILAIAMVWLESNTQFSIDTLLGIIAHSCLSLGVVTVGLLRNVRVDLMNYLFGDLLAINYTDLIYIGIGVIIVLSTLIYFWQSLLSTTVSPELAQVEGINIKKMRFILMILTALTIALSMKFVGALIITSLLIIPAATARRFARTPESMVGWAIIMSMLSIIGGLILSAFYDTAAGPSVVICSAFLFVLSLFKRERL</sequence>
<evidence type="ECO:0000250" key="1"/>
<evidence type="ECO:0000255" key="2"/>
<evidence type="ECO:0000305" key="3"/>
<proteinExistence type="inferred from homology"/>
<feature type="chain" id="PRO_0000171162" description="High-affinity zinc uptake system membrane protein ZnuB">
    <location>
        <begin position="1"/>
        <end position="261"/>
    </location>
</feature>
<feature type="transmembrane region" description="Helical" evidence="2">
    <location>
        <begin position="8"/>
        <end position="28"/>
    </location>
</feature>
<feature type="transmembrane region" description="Helical" evidence="2">
    <location>
        <begin position="54"/>
        <end position="74"/>
    </location>
</feature>
<feature type="transmembrane region" description="Helical" evidence="2">
    <location>
        <begin position="84"/>
        <end position="104"/>
    </location>
</feature>
<feature type="transmembrane region" description="Helical" evidence="2">
    <location>
        <begin position="125"/>
        <end position="145"/>
    </location>
</feature>
<feature type="transmembrane region" description="Helical" evidence="2">
    <location>
        <begin position="171"/>
        <end position="191"/>
    </location>
</feature>
<feature type="transmembrane region" description="Helical" evidence="2">
    <location>
        <begin position="214"/>
        <end position="234"/>
    </location>
</feature>
<feature type="transmembrane region" description="Helical" evidence="2">
    <location>
        <begin position="236"/>
        <end position="256"/>
    </location>
</feature>
<dbReference type="EMBL" id="L42023">
    <property type="protein sequence ID" value="AAC22066.1"/>
    <property type="molecule type" value="Genomic_DNA"/>
</dbReference>
<dbReference type="PIR" id="A64066">
    <property type="entry name" value="A64066"/>
</dbReference>
<dbReference type="RefSeq" id="NP_438569.1">
    <property type="nucleotide sequence ID" value="NC_000907.1"/>
</dbReference>
<dbReference type="SMR" id="P44691"/>
<dbReference type="STRING" id="71421.HI_0407"/>
<dbReference type="EnsemblBacteria" id="AAC22066">
    <property type="protein sequence ID" value="AAC22066"/>
    <property type="gene ID" value="HI_0407"/>
</dbReference>
<dbReference type="KEGG" id="hin:HI_0407"/>
<dbReference type="PATRIC" id="fig|71421.8.peg.426"/>
<dbReference type="eggNOG" id="COG1108">
    <property type="taxonomic scope" value="Bacteria"/>
</dbReference>
<dbReference type="HOGENOM" id="CLU_028808_3_2_6"/>
<dbReference type="OrthoDB" id="9783937at2"/>
<dbReference type="PhylomeDB" id="P44691"/>
<dbReference type="BioCyc" id="HINF71421:G1GJ1-422-MONOMER"/>
<dbReference type="Proteomes" id="UP000000579">
    <property type="component" value="Chromosome"/>
</dbReference>
<dbReference type="GO" id="GO:0043190">
    <property type="term" value="C:ATP-binding cassette (ABC) transporter complex"/>
    <property type="evidence" value="ECO:0007669"/>
    <property type="project" value="InterPro"/>
</dbReference>
<dbReference type="GO" id="GO:0005886">
    <property type="term" value="C:plasma membrane"/>
    <property type="evidence" value="ECO:0000318"/>
    <property type="project" value="GO_Central"/>
</dbReference>
<dbReference type="GO" id="GO:0010043">
    <property type="term" value="P:response to zinc ion"/>
    <property type="evidence" value="ECO:0000318"/>
    <property type="project" value="GO_Central"/>
</dbReference>
<dbReference type="GO" id="GO:0055085">
    <property type="term" value="P:transmembrane transport"/>
    <property type="evidence" value="ECO:0007669"/>
    <property type="project" value="InterPro"/>
</dbReference>
<dbReference type="GO" id="GO:0006829">
    <property type="term" value="P:zinc ion transport"/>
    <property type="evidence" value="ECO:0007669"/>
    <property type="project" value="UniProtKB-KW"/>
</dbReference>
<dbReference type="CDD" id="cd06550">
    <property type="entry name" value="TM_ABC_iron-siderophores_like"/>
    <property type="match status" value="1"/>
</dbReference>
<dbReference type="FunFam" id="1.10.3470.10:FF:000002">
    <property type="entry name" value="Zinc ABC transporter permease subunit ZnuB"/>
    <property type="match status" value="1"/>
</dbReference>
<dbReference type="Gene3D" id="1.10.3470.10">
    <property type="entry name" value="ABC transporter involved in vitamin B12 uptake, BtuC"/>
    <property type="match status" value="1"/>
</dbReference>
<dbReference type="InterPro" id="IPR037294">
    <property type="entry name" value="ABC_BtuC-like"/>
</dbReference>
<dbReference type="InterPro" id="IPR001626">
    <property type="entry name" value="ABC_TroCD"/>
</dbReference>
<dbReference type="NCBIfam" id="NF007089">
    <property type="entry name" value="PRK09543.1"/>
    <property type="match status" value="1"/>
</dbReference>
<dbReference type="PANTHER" id="PTHR30477">
    <property type="entry name" value="ABC-TRANSPORTER METAL-BINDING PROTEIN"/>
    <property type="match status" value="1"/>
</dbReference>
<dbReference type="PANTHER" id="PTHR30477:SF23">
    <property type="entry name" value="HIGH-AFFINITY ZINC UPTAKE SYSTEM MEMBRANE PROTEIN ZNUB"/>
    <property type="match status" value="1"/>
</dbReference>
<dbReference type="Pfam" id="PF00950">
    <property type="entry name" value="ABC-3"/>
    <property type="match status" value="1"/>
</dbReference>
<dbReference type="SUPFAM" id="SSF81345">
    <property type="entry name" value="ABC transporter involved in vitamin B12 uptake, BtuC"/>
    <property type="match status" value="1"/>
</dbReference>
<protein>
    <recommendedName>
        <fullName>High-affinity zinc uptake system membrane protein ZnuB</fullName>
    </recommendedName>
</protein>